<accession>P06760</accession>
<evidence type="ECO:0000250" key="1"/>
<evidence type="ECO:0000255" key="2"/>
<evidence type="ECO:0000305" key="3"/>
<evidence type="ECO:0000305" key="4">
    <source>
    </source>
</evidence>
<reference key="1">
    <citation type="journal article" date="1986" name="Proc. Natl. Acad. Sci. U.S.A.">
        <title>Nucleotide sequence of rat preputial gland beta-glucuronidase cDNA and in vitro insertion of its encoded polypeptide into microsomal membranes.</title>
        <authorList>
            <person name="Nishimura Y."/>
            <person name="Rosenfeld M.G."/>
            <person name="Kreibich G."/>
            <person name="Gubler U."/>
            <person name="Sabatini D.D."/>
            <person name="Adesnik M."/>
            <person name="Andy R."/>
        </authorList>
    </citation>
    <scope>NUCLEOTIDE SEQUENCE [MRNA]</scope>
    <source>
        <tissue>Preputial gland</tissue>
    </source>
</reference>
<reference key="2">
    <citation type="journal article" date="1988" name="Biochem. J.">
        <title>Rat liver beta-glucuronidase. cDNA cloning, sequence comparisons and expression of a chimeric protein in COS cells.</title>
        <authorList>
            <person name="Powell P.P."/>
            <person name="Kyle J.W."/>
            <person name="Miller R.D."/>
            <person name="Pantano J."/>
            <person name="Grubb J.H."/>
            <person name="Sly W.S."/>
        </authorList>
    </citation>
    <scope>NUCLEOTIDE SEQUENCE [MRNA] OF 14-648</scope>
    <scope>CATALYTIC ACTIVITY</scope>
    <source>
        <tissue>Liver</tissue>
    </source>
</reference>
<protein>
    <recommendedName>
        <fullName>Beta-glucuronidase</fullName>
        <ecNumber evidence="4">3.2.1.31</ecNumber>
    </recommendedName>
</protein>
<comment type="function">
    <text>Plays an important role in the degradation of dermatan and keratan sulfates.</text>
</comment>
<comment type="catalytic activity">
    <reaction evidence="4">
        <text>a beta-D-glucuronoside + H2O = D-glucuronate + an alcohol</text>
        <dbReference type="Rhea" id="RHEA:17633"/>
        <dbReference type="ChEBI" id="CHEBI:15377"/>
        <dbReference type="ChEBI" id="CHEBI:30879"/>
        <dbReference type="ChEBI" id="CHEBI:58720"/>
        <dbReference type="ChEBI" id="CHEBI:83411"/>
        <dbReference type="EC" id="3.2.1.31"/>
    </reaction>
    <physiologicalReaction direction="left-to-right" evidence="4">
        <dbReference type="Rhea" id="RHEA:17634"/>
    </physiologicalReaction>
</comment>
<comment type="activity regulation">
    <text evidence="1">Inhibited by L-aspartic acid.</text>
</comment>
<comment type="subunit">
    <text>Homotetramer.</text>
</comment>
<comment type="subcellular location">
    <subcellularLocation>
        <location>Lysosome</location>
    </subcellularLocation>
</comment>
<comment type="PTM">
    <text>Undergoes a post-transcriptional proteolytic cleavage near its C-terminal end, which reduces its size by approximately 3 kDa. The site of this cleavage has as yet not been determined.</text>
</comment>
<comment type="similarity">
    <text evidence="3">Belongs to the glycosyl hydrolase 2 family.</text>
</comment>
<gene>
    <name type="primary">Gusb</name>
    <name type="synonym">Gus</name>
</gene>
<organism>
    <name type="scientific">Rattus norvegicus</name>
    <name type="common">Rat</name>
    <dbReference type="NCBI Taxonomy" id="10116"/>
    <lineage>
        <taxon>Eukaryota</taxon>
        <taxon>Metazoa</taxon>
        <taxon>Chordata</taxon>
        <taxon>Craniata</taxon>
        <taxon>Vertebrata</taxon>
        <taxon>Euteleostomi</taxon>
        <taxon>Mammalia</taxon>
        <taxon>Eutheria</taxon>
        <taxon>Euarchontoglires</taxon>
        <taxon>Glires</taxon>
        <taxon>Rodentia</taxon>
        <taxon>Myomorpha</taxon>
        <taxon>Muroidea</taxon>
        <taxon>Muridae</taxon>
        <taxon>Murinae</taxon>
        <taxon>Rattus</taxon>
    </lineage>
</organism>
<sequence length="648" mass="74793">MSPRRSVCWFVLGQLLCSCAVALQGGMLFPKETPSRELKVLDGLWSFRADYSNNRLQGFEKQWYRQPLRESGPTLDMPVPSSFNDITQEAELRNFIGWVWYEREAVLPQRWTQDTDRRVVLRINSAHYYAVVWVNGIHVVEHEGGHLPFEADITKLVQSGPLTTFRVTIAINNTLTPYTLPPGTIVYKTDPSMYPKGYFVQDISFDFFNYAGLHRSVVLYTTPTTYIDDITVTTDVDRDVGLVNYWISVQGSDHFQLEVRLLDEDGKIVARGTGNEGQLKVPRAHLWWPYLMHEHPAYLYSLEVTMTTPESVSDFYTLPVGIRTVAVTKSKFLINGKPFYFQGVNKHEDSDIRGRGFDWPLLIKDFNLLRWLGANSFRTSHYPYSEEVLQLCDRYGIVVIDECPGVGIVLPQSFGNVSLRHHLEVMDELVRRDKNHPAVVMWSVANEPVSSLKPAGYYFKTLIAHTKALDPTRPVTFVSNTRYDADMGAPYVDVICVNSYLSWYHDYGHLEVIQLQLTSQFENWYKMYQKPIIQSEYGADAVSGLHEDPPRMFSEEYQTALLENYHLILDEKRKEYVIGELIWNFADFMTNQSPLRVTGNKKGIFTRQRNPKMAAFILRERYWRIANETRGYGSVPRTQCMGSRPFTF</sequence>
<name>BGLR_RAT</name>
<proteinExistence type="evidence at protein level"/>
<keyword id="KW-0325">Glycoprotein</keyword>
<keyword id="KW-0326">Glycosidase</keyword>
<keyword id="KW-0378">Hydrolase</keyword>
<keyword id="KW-0458">Lysosome</keyword>
<keyword id="KW-1185">Reference proteome</keyword>
<keyword id="KW-0732">Signal</keyword>
<dbReference type="EC" id="3.2.1.31" evidence="4"/>
<dbReference type="EMBL" id="M13962">
    <property type="protein sequence ID" value="AAA41228.1"/>
    <property type="molecule type" value="mRNA"/>
</dbReference>
<dbReference type="EMBL" id="Y00717">
    <property type="protein sequence ID" value="CAA68705.1"/>
    <property type="molecule type" value="mRNA"/>
</dbReference>
<dbReference type="PIR" id="A25047">
    <property type="entry name" value="A25047"/>
</dbReference>
<dbReference type="RefSeq" id="NP_058711.2">
    <property type="nucleotide sequence ID" value="NM_017015.2"/>
</dbReference>
<dbReference type="SMR" id="P06760"/>
<dbReference type="FunCoup" id="P06760">
    <property type="interactions" value="1461"/>
</dbReference>
<dbReference type="IntAct" id="P06760">
    <property type="interactions" value="1"/>
</dbReference>
<dbReference type="STRING" id="10116.ENSRNOP00000045033"/>
<dbReference type="BindingDB" id="P06760"/>
<dbReference type="ChEMBL" id="CHEMBL4814"/>
<dbReference type="DrugCentral" id="P06760"/>
<dbReference type="CAZy" id="GH2">
    <property type="family name" value="Glycoside Hydrolase Family 2"/>
</dbReference>
<dbReference type="GlyCosmos" id="P06760">
    <property type="glycosylation" value="3 sites, No reported glycans"/>
</dbReference>
<dbReference type="GlyGen" id="P06760">
    <property type="glycosylation" value="3 sites"/>
</dbReference>
<dbReference type="iPTMnet" id="P06760"/>
<dbReference type="PhosphoSitePlus" id="P06760"/>
<dbReference type="SwissPalm" id="P06760"/>
<dbReference type="jPOST" id="P06760"/>
<dbReference type="PaxDb" id="10116-ENSRNOP00000045033"/>
<dbReference type="PeptideAtlas" id="P06760"/>
<dbReference type="GeneID" id="24434"/>
<dbReference type="KEGG" id="rno:24434"/>
<dbReference type="AGR" id="RGD:2772"/>
<dbReference type="CTD" id="2990"/>
<dbReference type="RGD" id="2772">
    <property type="gene designation" value="Gusb"/>
</dbReference>
<dbReference type="eggNOG" id="KOG2024">
    <property type="taxonomic scope" value="Eukaryota"/>
</dbReference>
<dbReference type="InParanoid" id="P06760"/>
<dbReference type="OrthoDB" id="408532at2759"/>
<dbReference type="Reactome" id="R-RNO-2024096">
    <property type="pathway name" value="HS-GAG degradation"/>
</dbReference>
<dbReference type="Reactome" id="R-RNO-2160916">
    <property type="pathway name" value="Hyaluronan uptake and degradation"/>
</dbReference>
<dbReference type="Reactome" id="R-RNO-6798695">
    <property type="pathway name" value="Neutrophil degranulation"/>
</dbReference>
<dbReference type="SABIO-RK" id="P06760"/>
<dbReference type="PRO" id="PR:P06760"/>
<dbReference type="Proteomes" id="UP000002494">
    <property type="component" value="Unplaced"/>
</dbReference>
<dbReference type="GO" id="GO:0005615">
    <property type="term" value="C:extracellular space"/>
    <property type="evidence" value="ECO:0000266"/>
    <property type="project" value="RGD"/>
</dbReference>
<dbReference type="GO" id="GO:0043202">
    <property type="term" value="C:lysosomal lumen"/>
    <property type="evidence" value="ECO:0000266"/>
    <property type="project" value="RGD"/>
</dbReference>
<dbReference type="GO" id="GO:0005764">
    <property type="term" value="C:lysosome"/>
    <property type="evidence" value="ECO:0000266"/>
    <property type="project" value="RGD"/>
</dbReference>
<dbReference type="GO" id="GO:0004566">
    <property type="term" value="F:beta-glucuronidase activity"/>
    <property type="evidence" value="ECO:0000314"/>
    <property type="project" value="RGD"/>
</dbReference>
<dbReference type="GO" id="GO:0030246">
    <property type="term" value="F:carbohydrate binding"/>
    <property type="evidence" value="ECO:0000314"/>
    <property type="project" value="RGD"/>
</dbReference>
<dbReference type="GO" id="GO:0016787">
    <property type="term" value="F:hydrolase activity"/>
    <property type="evidence" value="ECO:0000266"/>
    <property type="project" value="RGD"/>
</dbReference>
<dbReference type="GO" id="GO:0019904">
    <property type="term" value="F:protein domain specific binding"/>
    <property type="evidence" value="ECO:0000266"/>
    <property type="project" value="RGD"/>
</dbReference>
<dbReference type="GO" id="GO:0005102">
    <property type="term" value="F:signaling receptor binding"/>
    <property type="evidence" value="ECO:0000266"/>
    <property type="project" value="RGD"/>
</dbReference>
<dbReference type="GO" id="GO:0005975">
    <property type="term" value="P:carbohydrate metabolic process"/>
    <property type="evidence" value="ECO:0000266"/>
    <property type="project" value="RGD"/>
</dbReference>
<dbReference type="GO" id="GO:0030207">
    <property type="term" value="P:chondroitin sulfate proteoglycan catabolic process"/>
    <property type="evidence" value="ECO:0000266"/>
    <property type="project" value="RGD"/>
</dbReference>
<dbReference type="GO" id="GO:0030200">
    <property type="term" value="P:heparan sulfate proteoglycan catabolic process"/>
    <property type="evidence" value="ECO:0000266"/>
    <property type="project" value="RGD"/>
</dbReference>
<dbReference type="GO" id="GO:0030214">
    <property type="term" value="P:hyaluronan catabolic process"/>
    <property type="evidence" value="ECO:0000266"/>
    <property type="project" value="RGD"/>
</dbReference>
<dbReference type="FunFam" id="2.60.120.260:FF:000027">
    <property type="entry name" value="Beta-glucuronidase"/>
    <property type="match status" value="1"/>
</dbReference>
<dbReference type="FunFam" id="2.60.40.10:FF:000628">
    <property type="entry name" value="Beta-glucuronidase"/>
    <property type="match status" value="1"/>
</dbReference>
<dbReference type="FunFam" id="3.20.20.80:FF:000029">
    <property type="entry name" value="Beta-glucuronidase"/>
    <property type="match status" value="1"/>
</dbReference>
<dbReference type="Gene3D" id="2.60.120.260">
    <property type="entry name" value="Galactose-binding domain-like"/>
    <property type="match status" value="1"/>
</dbReference>
<dbReference type="Gene3D" id="3.20.20.80">
    <property type="entry name" value="Glycosidases"/>
    <property type="match status" value="1"/>
</dbReference>
<dbReference type="Gene3D" id="2.60.40.10">
    <property type="entry name" value="Immunoglobulins"/>
    <property type="match status" value="1"/>
</dbReference>
<dbReference type="InterPro" id="IPR036156">
    <property type="entry name" value="Beta-gal/glucu_dom_sf"/>
</dbReference>
<dbReference type="InterPro" id="IPR008979">
    <property type="entry name" value="Galactose-bd-like_sf"/>
</dbReference>
<dbReference type="InterPro" id="IPR006101">
    <property type="entry name" value="Glyco_hydro_2"/>
</dbReference>
<dbReference type="InterPro" id="IPR023232">
    <property type="entry name" value="Glyco_hydro_2_AS"/>
</dbReference>
<dbReference type="InterPro" id="IPR006103">
    <property type="entry name" value="Glyco_hydro_2_cat"/>
</dbReference>
<dbReference type="InterPro" id="IPR023230">
    <property type="entry name" value="Glyco_hydro_2_CS"/>
</dbReference>
<dbReference type="InterPro" id="IPR006102">
    <property type="entry name" value="Glyco_hydro_2_Ig-like"/>
</dbReference>
<dbReference type="InterPro" id="IPR006104">
    <property type="entry name" value="Glyco_hydro_2_N"/>
</dbReference>
<dbReference type="InterPro" id="IPR017853">
    <property type="entry name" value="Glycoside_hydrolase_SF"/>
</dbReference>
<dbReference type="InterPro" id="IPR013783">
    <property type="entry name" value="Ig-like_fold"/>
</dbReference>
<dbReference type="NCBIfam" id="NF007538">
    <property type="entry name" value="PRK10150.1"/>
    <property type="match status" value="1"/>
</dbReference>
<dbReference type="PANTHER" id="PTHR10066">
    <property type="entry name" value="BETA-GLUCURONIDASE"/>
    <property type="match status" value="1"/>
</dbReference>
<dbReference type="PANTHER" id="PTHR10066:SF67">
    <property type="entry name" value="BETA-GLUCURONIDASE"/>
    <property type="match status" value="1"/>
</dbReference>
<dbReference type="Pfam" id="PF00703">
    <property type="entry name" value="Glyco_hydro_2"/>
    <property type="match status" value="1"/>
</dbReference>
<dbReference type="Pfam" id="PF02836">
    <property type="entry name" value="Glyco_hydro_2_C"/>
    <property type="match status" value="1"/>
</dbReference>
<dbReference type="Pfam" id="PF02837">
    <property type="entry name" value="Glyco_hydro_2_N"/>
    <property type="match status" value="1"/>
</dbReference>
<dbReference type="PRINTS" id="PR00132">
    <property type="entry name" value="GLHYDRLASE2"/>
</dbReference>
<dbReference type="SUPFAM" id="SSF51445">
    <property type="entry name" value="(Trans)glycosidases"/>
    <property type="match status" value="1"/>
</dbReference>
<dbReference type="SUPFAM" id="SSF49303">
    <property type="entry name" value="beta-Galactosidase/glucuronidase domain"/>
    <property type="match status" value="1"/>
</dbReference>
<dbReference type="SUPFAM" id="SSF49785">
    <property type="entry name" value="Galactose-binding domain-like"/>
    <property type="match status" value="1"/>
</dbReference>
<dbReference type="PROSITE" id="PS00719">
    <property type="entry name" value="GLYCOSYL_HYDROL_F2_1"/>
    <property type="match status" value="1"/>
</dbReference>
<dbReference type="PROSITE" id="PS00608">
    <property type="entry name" value="GLYCOSYL_HYDROL_F2_2"/>
    <property type="match status" value="1"/>
</dbReference>
<feature type="signal peptide">
    <location>
        <begin position="1"/>
        <end position="22"/>
    </location>
</feature>
<feature type="chain" id="PRO_0000012163" description="Beta-glucuronidase">
    <location>
        <begin position="23"/>
        <end position="648"/>
    </location>
</feature>
<feature type="active site" description="Proton donor" evidence="1">
    <location>
        <position position="447"/>
    </location>
</feature>
<feature type="glycosylation site" description="N-linked (GlcNAc...) asparagine" evidence="2">
    <location>
        <position position="172"/>
    </location>
</feature>
<feature type="glycosylation site" description="N-linked (GlcNAc...) asparagine" evidence="2">
    <location>
        <position position="416"/>
    </location>
</feature>
<feature type="glycosylation site" description="N-linked (GlcNAc...) asparagine" evidence="2">
    <location>
        <position position="627"/>
    </location>
</feature>
<feature type="sequence conflict" description="In Ref. 2; CAA68705." evidence="3" ref="2">
    <original>Q</original>
    <variation>E</variation>
    <location>
        <position position="14"/>
    </location>
</feature>
<feature type="sequence conflict" description="In Ref. 2; CAA68705." evidence="3" ref="2">
    <original>V</original>
    <variation>L</variation>
    <location>
        <position position="21"/>
    </location>
</feature>
<feature type="sequence conflict" description="In Ref. 2; CAA68705." evidence="3" ref="2">
    <original>M</original>
    <variation>L</variation>
    <location>
        <position position="487"/>
    </location>
</feature>